<accession>Q81HQ1</accession>
<sequence>MIWVAVIITMLLFILVAKPTGIYLEKAFQGSKTLDKVFGPFEKLIFKITGVKAYNQTWKQYALSLVLLNGFMIVVVYFIFRLQGVLPLNPAHIEGMEPTLAFNTAISFMADTNLQHYSGENGLSYLSQLIGITFLMFAAPATTLALVMAFIRGLAGKELGNFFVDFTRALTRVFLPIAFIAALVFVALGVPQTLDGAVTAQTIEGAKQSILRGPVASFVSIKELGNNGGGFFGANSTHPFENPGQMSNILQMMLMMLLPTALPFTYGRMVGNKKQGRILFVSLFMVFLLGFITITTSELNGNPALNGMGIEHVQGSTEGKEVRFGTVFSSLYATVTTAAETGAVNTMHDTLTPIGGLVPLVNMMLNTVYGGVGAGFVNIIMYAIIAVFISGLMVGRTPEFLGKKIEGKEMKLIAVTILFHPLLILGFSALALSTNLGTDAISHSGFHGLTQVVYEYTSSAANNGSGFEGLGDNTPFWNITTGLVMFLGRYFSLITMLAVAASLKEKTVVPETVGTFRTDNSLFGGIFIGTIVIVGALTFFPMLVLGPIAEFLTLK</sequence>
<gene>
    <name evidence="1" type="primary">kdpA</name>
    <name type="ordered locus">BC_0753</name>
</gene>
<reference key="1">
    <citation type="journal article" date="2003" name="Nature">
        <title>Genome sequence of Bacillus cereus and comparative analysis with Bacillus anthracis.</title>
        <authorList>
            <person name="Ivanova N."/>
            <person name="Sorokin A."/>
            <person name="Anderson I."/>
            <person name="Galleron N."/>
            <person name="Candelon B."/>
            <person name="Kapatral V."/>
            <person name="Bhattacharyya A."/>
            <person name="Reznik G."/>
            <person name="Mikhailova N."/>
            <person name="Lapidus A."/>
            <person name="Chu L."/>
            <person name="Mazur M."/>
            <person name="Goltsman E."/>
            <person name="Larsen N."/>
            <person name="D'Souza M."/>
            <person name="Walunas T."/>
            <person name="Grechkin Y."/>
            <person name="Pusch G."/>
            <person name="Haselkorn R."/>
            <person name="Fonstein M."/>
            <person name="Ehrlich S.D."/>
            <person name="Overbeek R."/>
            <person name="Kyrpides N.C."/>
        </authorList>
    </citation>
    <scope>NUCLEOTIDE SEQUENCE [LARGE SCALE GENOMIC DNA]</scope>
    <source>
        <strain>ATCC 14579 / DSM 31 / CCUG 7414 / JCM 2152 / NBRC 15305 / NCIMB 9373 / NCTC 2599 / NRRL B-3711</strain>
    </source>
</reference>
<organism>
    <name type="scientific">Bacillus cereus (strain ATCC 14579 / DSM 31 / CCUG 7414 / JCM 2152 / NBRC 15305 / NCIMB 9373 / NCTC 2599 / NRRL B-3711)</name>
    <dbReference type="NCBI Taxonomy" id="226900"/>
    <lineage>
        <taxon>Bacteria</taxon>
        <taxon>Bacillati</taxon>
        <taxon>Bacillota</taxon>
        <taxon>Bacilli</taxon>
        <taxon>Bacillales</taxon>
        <taxon>Bacillaceae</taxon>
        <taxon>Bacillus</taxon>
        <taxon>Bacillus cereus group</taxon>
    </lineage>
</organism>
<keyword id="KW-1003">Cell membrane</keyword>
<keyword id="KW-0406">Ion transport</keyword>
<keyword id="KW-0472">Membrane</keyword>
<keyword id="KW-0630">Potassium</keyword>
<keyword id="KW-0633">Potassium transport</keyword>
<keyword id="KW-1185">Reference proteome</keyword>
<keyword id="KW-0812">Transmembrane</keyword>
<keyword id="KW-1133">Transmembrane helix</keyword>
<keyword id="KW-0813">Transport</keyword>
<protein>
    <recommendedName>
        <fullName evidence="1">Potassium-transporting ATPase potassium-binding subunit</fullName>
    </recommendedName>
    <alternativeName>
        <fullName evidence="1">ATP phosphohydrolase [potassium-transporting] A chain</fullName>
    </alternativeName>
    <alternativeName>
        <fullName evidence="1">Potassium-binding and translocating subunit A</fullName>
    </alternativeName>
    <alternativeName>
        <fullName evidence="1">Potassium-translocating ATPase A chain</fullName>
    </alternativeName>
</protein>
<comment type="function">
    <text evidence="1">Part of the high-affinity ATP-driven potassium transport (or Kdp) system, which catalyzes the hydrolysis of ATP coupled with the electrogenic transport of potassium into the cytoplasm. This subunit binds the extracellular potassium ions and delivers the ions to the membrane domain of KdpB through an intramembrane tunnel.</text>
</comment>
<comment type="subunit">
    <text evidence="1">The system is composed of three essential subunits: KdpA, KdpB and KdpC.</text>
</comment>
<comment type="subcellular location">
    <subcellularLocation>
        <location evidence="1">Cell membrane</location>
        <topology evidence="1">Multi-pass membrane protein</topology>
    </subcellularLocation>
</comment>
<comment type="similarity">
    <text evidence="1">Belongs to the KdpA family.</text>
</comment>
<feature type="chain" id="PRO_0000166479" description="Potassium-transporting ATPase potassium-binding subunit">
    <location>
        <begin position="1"/>
        <end position="555"/>
    </location>
</feature>
<feature type="transmembrane region" description="Helical" evidence="1">
    <location>
        <begin position="2"/>
        <end position="22"/>
    </location>
</feature>
<feature type="transmembrane region" description="Helical" evidence="1">
    <location>
        <begin position="60"/>
        <end position="80"/>
    </location>
</feature>
<feature type="transmembrane region" description="Helical" evidence="1">
    <location>
        <begin position="130"/>
        <end position="150"/>
    </location>
</feature>
<feature type="transmembrane region" description="Helical" evidence="1">
    <location>
        <begin position="173"/>
        <end position="193"/>
    </location>
</feature>
<feature type="transmembrane region" description="Helical" evidence="1">
    <location>
        <begin position="246"/>
        <end position="266"/>
    </location>
</feature>
<feature type="transmembrane region" description="Helical" evidence="1">
    <location>
        <begin position="278"/>
        <end position="298"/>
    </location>
</feature>
<feature type="transmembrane region" description="Helical" evidence="1">
    <location>
        <begin position="374"/>
        <end position="394"/>
    </location>
</feature>
<feature type="transmembrane region" description="Helical" evidence="1">
    <location>
        <begin position="412"/>
        <end position="432"/>
    </location>
</feature>
<feature type="transmembrane region" description="Helical" evidence="1">
    <location>
        <begin position="483"/>
        <end position="503"/>
    </location>
</feature>
<feature type="transmembrane region" description="Helical" evidence="1">
    <location>
        <begin position="525"/>
        <end position="545"/>
    </location>
</feature>
<proteinExistence type="inferred from homology"/>
<dbReference type="EMBL" id="AE016877">
    <property type="protein sequence ID" value="AAP07744.1"/>
    <property type="molecule type" value="Genomic_DNA"/>
</dbReference>
<dbReference type="RefSeq" id="NP_830543.1">
    <property type="nucleotide sequence ID" value="NC_004722.1"/>
</dbReference>
<dbReference type="RefSeq" id="WP_000638330.1">
    <property type="nucleotide sequence ID" value="NZ_CP138336.1"/>
</dbReference>
<dbReference type="SMR" id="Q81HQ1"/>
<dbReference type="STRING" id="226900.BC_0753"/>
<dbReference type="KEGG" id="bce:BC0753"/>
<dbReference type="PATRIC" id="fig|226900.8.peg.695"/>
<dbReference type="HOGENOM" id="CLU_018614_3_0_9"/>
<dbReference type="OrthoDB" id="9763796at2"/>
<dbReference type="Proteomes" id="UP000001417">
    <property type="component" value="Chromosome"/>
</dbReference>
<dbReference type="GO" id="GO:0005886">
    <property type="term" value="C:plasma membrane"/>
    <property type="evidence" value="ECO:0000318"/>
    <property type="project" value="GO_Central"/>
</dbReference>
<dbReference type="GO" id="GO:0008556">
    <property type="term" value="F:P-type potassium transmembrane transporter activity"/>
    <property type="evidence" value="ECO:0000318"/>
    <property type="project" value="GO_Central"/>
</dbReference>
<dbReference type="GO" id="GO:0030955">
    <property type="term" value="F:potassium ion binding"/>
    <property type="evidence" value="ECO:0007669"/>
    <property type="project" value="UniProtKB-UniRule"/>
</dbReference>
<dbReference type="GO" id="GO:0071805">
    <property type="term" value="P:potassium ion transmembrane transport"/>
    <property type="evidence" value="ECO:0000318"/>
    <property type="project" value="GO_Central"/>
</dbReference>
<dbReference type="HAMAP" id="MF_00275">
    <property type="entry name" value="KdpA"/>
    <property type="match status" value="1"/>
</dbReference>
<dbReference type="InterPro" id="IPR004623">
    <property type="entry name" value="KdpA"/>
</dbReference>
<dbReference type="NCBIfam" id="TIGR00680">
    <property type="entry name" value="kdpA"/>
    <property type="match status" value="1"/>
</dbReference>
<dbReference type="PANTHER" id="PTHR30607">
    <property type="entry name" value="POTASSIUM-TRANSPORTING ATPASE A CHAIN"/>
    <property type="match status" value="1"/>
</dbReference>
<dbReference type="PANTHER" id="PTHR30607:SF2">
    <property type="entry name" value="POTASSIUM-TRANSPORTING ATPASE POTASSIUM-BINDING SUBUNIT"/>
    <property type="match status" value="1"/>
</dbReference>
<dbReference type="Pfam" id="PF03814">
    <property type="entry name" value="KdpA"/>
    <property type="match status" value="1"/>
</dbReference>
<dbReference type="PIRSF" id="PIRSF001294">
    <property type="entry name" value="K_ATPaseA"/>
    <property type="match status" value="1"/>
</dbReference>
<evidence type="ECO:0000255" key="1">
    <source>
        <dbReference type="HAMAP-Rule" id="MF_00275"/>
    </source>
</evidence>
<name>KDPA_BACCR</name>